<organism>
    <name type="scientific">Enterococcus faecalis (strain ATCC 700802 / V583)</name>
    <dbReference type="NCBI Taxonomy" id="226185"/>
    <lineage>
        <taxon>Bacteria</taxon>
        <taxon>Bacillati</taxon>
        <taxon>Bacillota</taxon>
        <taxon>Bacilli</taxon>
        <taxon>Lactobacillales</taxon>
        <taxon>Enterococcaceae</taxon>
        <taxon>Enterococcus</taxon>
    </lineage>
</organism>
<evidence type="ECO:0000255" key="1">
    <source>
        <dbReference type="HAMAP-Rule" id="MF_00503"/>
    </source>
</evidence>
<evidence type="ECO:0000305" key="2"/>
<keyword id="KW-1185">Reference proteome</keyword>
<keyword id="KW-0687">Ribonucleoprotein</keyword>
<keyword id="KW-0689">Ribosomal protein</keyword>
<keyword id="KW-0694">RNA-binding</keyword>
<keyword id="KW-0699">rRNA-binding</keyword>
<reference key="1">
    <citation type="journal article" date="2003" name="Science">
        <title>Role of mobile DNA in the evolution of vancomycin-resistant Enterococcus faecalis.</title>
        <authorList>
            <person name="Paulsen I.T."/>
            <person name="Banerjei L."/>
            <person name="Myers G.S.A."/>
            <person name="Nelson K.E."/>
            <person name="Seshadri R."/>
            <person name="Read T.D."/>
            <person name="Fouts D.E."/>
            <person name="Eisen J.A."/>
            <person name="Gill S.R."/>
            <person name="Heidelberg J.F."/>
            <person name="Tettelin H."/>
            <person name="Dodson R.J."/>
            <person name="Umayam L.A."/>
            <person name="Brinkac L.M."/>
            <person name="Beanan M.J."/>
            <person name="Daugherty S.C."/>
            <person name="DeBoy R.T."/>
            <person name="Durkin S.A."/>
            <person name="Kolonay J.F."/>
            <person name="Madupu R."/>
            <person name="Nelson W.C."/>
            <person name="Vamathevan J.J."/>
            <person name="Tran B."/>
            <person name="Upton J."/>
            <person name="Hansen T."/>
            <person name="Shetty J."/>
            <person name="Khouri H.M."/>
            <person name="Utterback T.R."/>
            <person name="Radune D."/>
            <person name="Ketchum K.A."/>
            <person name="Dougherty B.A."/>
            <person name="Fraser C.M."/>
        </authorList>
    </citation>
    <scope>NUCLEOTIDE SEQUENCE [LARGE SCALE GENOMIC DNA]</scope>
    <source>
        <strain>ATCC 700802 / V583</strain>
    </source>
</reference>
<comment type="function">
    <text evidence="1">Binds to the 23S rRNA.</text>
</comment>
<comment type="similarity">
    <text evidence="1">Belongs to the bacterial ribosomal protein bL9 family.</text>
</comment>
<proteinExistence type="inferred from homology"/>
<sequence length="150" mass="16585">MKVIFLQDVKGKGKKGDVKEVPTGYAQNFLIKNGYAKEANKGSMSALAGQKKAQEKHEAEVLAQAKEMQAFLEDEKTVVEIKAKAGEDSRLFGSIPSKQIAEALNKQYNVKLDKRKIELANPIRSLGYTNVPVKLHHEVTAKIKVHVVAE</sequence>
<dbReference type="EMBL" id="AE016830">
    <property type="protein sequence ID" value="AAO79896.1"/>
    <property type="molecule type" value="Genomic_DNA"/>
</dbReference>
<dbReference type="RefSeq" id="NP_813824.1">
    <property type="nucleotide sequence ID" value="NC_004668.1"/>
</dbReference>
<dbReference type="RefSeq" id="WP_002356023.1">
    <property type="nucleotide sequence ID" value="NZ_KE136524.1"/>
</dbReference>
<dbReference type="SMR" id="Q839Y6"/>
<dbReference type="STRING" id="226185.EF_0012"/>
<dbReference type="EnsemblBacteria" id="AAO79896">
    <property type="protein sequence ID" value="AAO79896"/>
    <property type="gene ID" value="EF_0012"/>
</dbReference>
<dbReference type="GeneID" id="60892574"/>
<dbReference type="KEGG" id="efa:EF0012"/>
<dbReference type="PATRIC" id="fig|226185.45.peg.243"/>
<dbReference type="eggNOG" id="COG0359">
    <property type="taxonomic scope" value="Bacteria"/>
</dbReference>
<dbReference type="HOGENOM" id="CLU_078938_3_2_9"/>
<dbReference type="Proteomes" id="UP000001415">
    <property type="component" value="Chromosome"/>
</dbReference>
<dbReference type="GO" id="GO:1990904">
    <property type="term" value="C:ribonucleoprotein complex"/>
    <property type="evidence" value="ECO:0007669"/>
    <property type="project" value="UniProtKB-KW"/>
</dbReference>
<dbReference type="GO" id="GO:0005840">
    <property type="term" value="C:ribosome"/>
    <property type="evidence" value="ECO:0007669"/>
    <property type="project" value="UniProtKB-KW"/>
</dbReference>
<dbReference type="GO" id="GO:0019843">
    <property type="term" value="F:rRNA binding"/>
    <property type="evidence" value="ECO:0007669"/>
    <property type="project" value="UniProtKB-UniRule"/>
</dbReference>
<dbReference type="GO" id="GO:0003735">
    <property type="term" value="F:structural constituent of ribosome"/>
    <property type="evidence" value="ECO:0007669"/>
    <property type="project" value="InterPro"/>
</dbReference>
<dbReference type="GO" id="GO:0006412">
    <property type="term" value="P:translation"/>
    <property type="evidence" value="ECO:0007669"/>
    <property type="project" value="UniProtKB-UniRule"/>
</dbReference>
<dbReference type="FunFam" id="3.10.430.100:FF:000002">
    <property type="entry name" value="50S ribosomal protein L9"/>
    <property type="match status" value="1"/>
</dbReference>
<dbReference type="FunFam" id="3.40.5.10:FF:000002">
    <property type="entry name" value="50S ribosomal protein L9"/>
    <property type="match status" value="1"/>
</dbReference>
<dbReference type="Gene3D" id="3.10.430.100">
    <property type="entry name" value="Ribosomal protein L9, C-terminal domain"/>
    <property type="match status" value="1"/>
</dbReference>
<dbReference type="Gene3D" id="3.40.5.10">
    <property type="entry name" value="Ribosomal protein L9, N-terminal domain"/>
    <property type="match status" value="1"/>
</dbReference>
<dbReference type="HAMAP" id="MF_00503">
    <property type="entry name" value="Ribosomal_bL9"/>
    <property type="match status" value="1"/>
</dbReference>
<dbReference type="InterPro" id="IPR000244">
    <property type="entry name" value="Ribosomal_bL9"/>
</dbReference>
<dbReference type="InterPro" id="IPR009027">
    <property type="entry name" value="Ribosomal_bL9/RNase_H1_N"/>
</dbReference>
<dbReference type="InterPro" id="IPR020594">
    <property type="entry name" value="Ribosomal_bL9_bac/chp"/>
</dbReference>
<dbReference type="InterPro" id="IPR020069">
    <property type="entry name" value="Ribosomal_bL9_C"/>
</dbReference>
<dbReference type="InterPro" id="IPR036791">
    <property type="entry name" value="Ribosomal_bL9_C_sf"/>
</dbReference>
<dbReference type="InterPro" id="IPR020070">
    <property type="entry name" value="Ribosomal_bL9_N"/>
</dbReference>
<dbReference type="InterPro" id="IPR036935">
    <property type="entry name" value="Ribosomal_bL9_N_sf"/>
</dbReference>
<dbReference type="NCBIfam" id="TIGR00158">
    <property type="entry name" value="L9"/>
    <property type="match status" value="1"/>
</dbReference>
<dbReference type="PANTHER" id="PTHR21368">
    <property type="entry name" value="50S RIBOSOMAL PROTEIN L9"/>
    <property type="match status" value="1"/>
</dbReference>
<dbReference type="Pfam" id="PF03948">
    <property type="entry name" value="Ribosomal_L9_C"/>
    <property type="match status" value="1"/>
</dbReference>
<dbReference type="Pfam" id="PF01281">
    <property type="entry name" value="Ribosomal_L9_N"/>
    <property type="match status" value="1"/>
</dbReference>
<dbReference type="SUPFAM" id="SSF55658">
    <property type="entry name" value="L9 N-domain-like"/>
    <property type="match status" value="1"/>
</dbReference>
<dbReference type="SUPFAM" id="SSF55653">
    <property type="entry name" value="Ribosomal protein L9 C-domain"/>
    <property type="match status" value="1"/>
</dbReference>
<dbReference type="PROSITE" id="PS00651">
    <property type="entry name" value="RIBOSOMAL_L9"/>
    <property type="match status" value="1"/>
</dbReference>
<accession>Q839Y6</accession>
<gene>
    <name evidence="1" type="primary">rplI</name>
    <name type="ordered locus">EF_0012</name>
</gene>
<feature type="chain" id="PRO_0000236521" description="Large ribosomal subunit protein bL9">
    <location>
        <begin position="1"/>
        <end position="150"/>
    </location>
</feature>
<protein>
    <recommendedName>
        <fullName evidence="1">Large ribosomal subunit protein bL9</fullName>
    </recommendedName>
    <alternativeName>
        <fullName evidence="2">50S ribosomal protein L9</fullName>
    </alternativeName>
</protein>
<name>RL9_ENTFA</name>